<sequence>MISSLHRPTVARVDLEAIRANIDHIHQHIPKKVRTYAVVKANAYGHGAVAVSKAVEDQVDGYCVSNLDEALELRQAGIDKEILILGVILASELQLAIKHQLTITVASLEWLELAKKESVDFSQLHVHVKVDSGMGRIGVRSLAEANQLISILSDMGVQLDGIFTHFATADDSDHAMFDKQLTFFKQLVEQLDKRPALVHASNSATSLWHSETIFNAIRLGIVIYGLNPSGNSLSLPCPLKEALSLESRLVHVKQIQAGDSVGYGASYVAAEPEYVGTLPIGYADGWTRNMQGFKVLVEGEFCDIIGRVSMDQLTIRLPKAYPIGTKVTLIGQQGKQVITATDVADYRGTINYEVLCLLSDRIPREY</sequence>
<proteinExistence type="inferred from homology"/>
<feature type="chain" id="PRO_1000164627" description="Alanine racemase">
    <location>
        <begin position="1"/>
        <end position="366"/>
    </location>
</feature>
<feature type="active site" description="Proton acceptor; specific for D-alanine" evidence="1">
    <location>
        <position position="40"/>
    </location>
</feature>
<feature type="active site" description="Proton acceptor; specific for L-alanine" evidence="1">
    <location>
        <position position="263"/>
    </location>
</feature>
<feature type="binding site" evidence="1">
    <location>
        <position position="136"/>
    </location>
    <ligand>
        <name>substrate</name>
    </ligand>
</feature>
<feature type="binding site" evidence="1">
    <location>
        <position position="310"/>
    </location>
    <ligand>
        <name>substrate</name>
    </ligand>
</feature>
<feature type="modified residue" description="N6-(pyridoxal phosphate)lysine" evidence="1">
    <location>
        <position position="40"/>
    </location>
</feature>
<accession>C0M6I5</accession>
<comment type="function">
    <text evidence="1">Catalyzes the interconversion of L-alanine and D-alanine. May also act on other amino acids.</text>
</comment>
<comment type="catalytic activity">
    <reaction evidence="1">
        <text>L-alanine = D-alanine</text>
        <dbReference type="Rhea" id="RHEA:20249"/>
        <dbReference type="ChEBI" id="CHEBI:57416"/>
        <dbReference type="ChEBI" id="CHEBI:57972"/>
        <dbReference type="EC" id="5.1.1.1"/>
    </reaction>
</comment>
<comment type="cofactor">
    <cofactor evidence="1">
        <name>pyridoxal 5'-phosphate</name>
        <dbReference type="ChEBI" id="CHEBI:597326"/>
    </cofactor>
</comment>
<comment type="pathway">
    <text evidence="1">Amino-acid biosynthesis; D-alanine biosynthesis; D-alanine from L-alanine: step 1/1.</text>
</comment>
<comment type="similarity">
    <text evidence="1">Belongs to the alanine racemase family.</text>
</comment>
<evidence type="ECO:0000255" key="1">
    <source>
        <dbReference type="HAMAP-Rule" id="MF_01201"/>
    </source>
</evidence>
<keyword id="KW-0413">Isomerase</keyword>
<keyword id="KW-0663">Pyridoxal phosphate</keyword>
<dbReference type="EC" id="5.1.1.1" evidence="1"/>
<dbReference type="EMBL" id="FM204883">
    <property type="protein sequence ID" value="CAW92611.1"/>
    <property type="molecule type" value="Genomic_DNA"/>
</dbReference>
<dbReference type="RefSeq" id="WP_012679047.1">
    <property type="nucleotide sequence ID" value="NC_012471.1"/>
</dbReference>
<dbReference type="SMR" id="C0M6I5"/>
<dbReference type="KEGG" id="seu:SEQ_0437"/>
<dbReference type="HOGENOM" id="CLU_028393_2_1_9"/>
<dbReference type="OrthoDB" id="9813814at2"/>
<dbReference type="UniPathway" id="UPA00042">
    <property type="reaction ID" value="UER00497"/>
</dbReference>
<dbReference type="Proteomes" id="UP000001365">
    <property type="component" value="Chromosome"/>
</dbReference>
<dbReference type="GO" id="GO:0005829">
    <property type="term" value="C:cytosol"/>
    <property type="evidence" value="ECO:0007669"/>
    <property type="project" value="TreeGrafter"/>
</dbReference>
<dbReference type="GO" id="GO:0008784">
    <property type="term" value="F:alanine racemase activity"/>
    <property type="evidence" value="ECO:0007669"/>
    <property type="project" value="UniProtKB-UniRule"/>
</dbReference>
<dbReference type="GO" id="GO:0030170">
    <property type="term" value="F:pyridoxal phosphate binding"/>
    <property type="evidence" value="ECO:0007669"/>
    <property type="project" value="UniProtKB-UniRule"/>
</dbReference>
<dbReference type="GO" id="GO:0030632">
    <property type="term" value="P:D-alanine biosynthetic process"/>
    <property type="evidence" value="ECO:0007669"/>
    <property type="project" value="UniProtKB-UniRule"/>
</dbReference>
<dbReference type="GO" id="GO:0009252">
    <property type="term" value="P:peptidoglycan biosynthetic process"/>
    <property type="evidence" value="ECO:0007669"/>
    <property type="project" value="TreeGrafter"/>
</dbReference>
<dbReference type="CDD" id="cd00430">
    <property type="entry name" value="PLPDE_III_AR"/>
    <property type="match status" value="1"/>
</dbReference>
<dbReference type="FunFam" id="2.40.37.10:FF:000006">
    <property type="entry name" value="Alanine racemase"/>
    <property type="match status" value="1"/>
</dbReference>
<dbReference type="FunFam" id="3.20.20.10:FF:000002">
    <property type="entry name" value="Alanine racemase"/>
    <property type="match status" value="1"/>
</dbReference>
<dbReference type="Gene3D" id="3.20.20.10">
    <property type="entry name" value="Alanine racemase"/>
    <property type="match status" value="1"/>
</dbReference>
<dbReference type="Gene3D" id="2.40.37.10">
    <property type="entry name" value="Lyase, Ornithine Decarboxylase, Chain A, domain 1"/>
    <property type="match status" value="1"/>
</dbReference>
<dbReference type="HAMAP" id="MF_01201">
    <property type="entry name" value="Ala_racemase"/>
    <property type="match status" value="1"/>
</dbReference>
<dbReference type="InterPro" id="IPR000821">
    <property type="entry name" value="Ala_racemase"/>
</dbReference>
<dbReference type="InterPro" id="IPR009006">
    <property type="entry name" value="Ala_racemase/Decarboxylase_C"/>
</dbReference>
<dbReference type="InterPro" id="IPR011079">
    <property type="entry name" value="Ala_racemase_C"/>
</dbReference>
<dbReference type="InterPro" id="IPR001608">
    <property type="entry name" value="Ala_racemase_N"/>
</dbReference>
<dbReference type="InterPro" id="IPR020622">
    <property type="entry name" value="Ala_racemase_pyridoxalP-BS"/>
</dbReference>
<dbReference type="InterPro" id="IPR029066">
    <property type="entry name" value="PLP-binding_barrel"/>
</dbReference>
<dbReference type="NCBIfam" id="TIGR00492">
    <property type="entry name" value="alr"/>
    <property type="match status" value="1"/>
</dbReference>
<dbReference type="PANTHER" id="PTHR30511">
    <property type="entry name" value="ALANINE RACEMASE"/>
    <property type="match status" value="1"/>
</dbReference>
<dbReference type="PANTHER" id="PTHR30511:SF0">
    <property type="entry name" value="ALANINE RACEMASE, CATABOLIC-RELATED"/>
    <property type="match status" value="1"/>
</dbReference>
<dbReference type="Pfam" id="PF00842">
    <property type="entry name" value="Ala_racemase_C"/>
    <property type="match status" value="1"/>
</dbReference>
<dbReference type="Pfam" id="PF01168">
    <property type="entry name" value="Ala_racemase_N"/>
    <property type="match status" value="1"/>
</dbReference>
<dbReference type="PRINTS" id="PR00992">
    <property type="entry name" value="ALARACEMASE"/>
</dbReference>
<dbReference type="SMART" id="SM01005">
    <property type="entry name" value="Ala_racemase_C"/>
    <property type="match status" value="1"/>
</dbReference>
<dbReference type="SUPFAM" id="SSF50621">
    <property type="entry name" value="Alanine racemase C-terminal domain-like"/>
    <property type="match status" value="1"/>
</dbReference>
<dbReference type="SUPFAM" id="SSF51419">
    <property type="entry name" value="PLP-binding barrel"/>
    <property type="match status" value="1"/>
</dbReference>
<dbReference type="PROSITE" id="PS00395">
    <property type="entry name" value="ALANINE_RACEMASE"/>
    <property type="match status" value="1"/>
</dbReference>
<organism>
    <name type="scientific">Streptococcus equi subsp. equi (strain 4047)</name>
    <dbReference type="NCBI Taxonomy" id="553482"/>
    <lineage>
        <taxon>Bacteria</taxon>
        <taxon>Bacillati</taxon>
        <taxon>Bacillota</taxon>
        <taxon>Bacilli</taxon>
        <taxon>Lactobacillales</taxon>
        <taxon>Streptococcaceae</taxon>
        <taxon>Streptococcus</taxon>
    </lineage>
</organism>
<gene>
    <name type="primary">alr</name>
    <name type="ordered locus">SEQ_0437</name>
</gene>
<name>ALR_STRE4</name>
<protein>
    <recommendedName>
        <fullName evidence="1">Alanine racemase</fullName>
        <ecNumber evidence="1">5.1.1.1</ecNumber>
    </recommendedName>
</protein>
<reference key="1">
    <citation type="journal article" date="2009" name="PLoS Pathog.">
        <title>Genomic evidence for the evolution of Streptococcus equi: host restriction, increased virulence, and genetic exchange with human pathogens.</title>
        <authorList>
            <person name="Holden M.T.G."/>
            <person name="Heather Z."/>
            <person name="Paillot R."/>
            <person name="Steward K.F."/>
            <person name="Webb K."/>
            <person name="Ainslie F."/>
            <person name="Jourdan T."/>
            <person name="Bason N.C."/>
            <person name="Holroyd N.E."/>
            <person name="Mungall K."/>
            <person name="Quail M.A."/>
            <person name="Sanders M."/>
            <person name="Simmonds M."/>
            <person name="Willey D."/>
            <person name="Brooks K."/>
            <person name="Aanensen D.M."/>
            <person name="Spratt B.G."/>
            <person name="Jolley K.A."/>
            <person name="Maiden M.C.J."/>
            <person name="Kehoe M."/>
            <person name="Chanter N."/>
            <person name="Bentley S.D."/>
            <person name="Robinson C."/>
            <person name="Maskell D.J."/>
            <person name="Parkhill J."/>
            <person name="Waller A.S."/>
        </authorList>
    </citation>
    <scope>NUCLEOTIDE SEQUENCE [LARGE SCALE GENOMIC DNA]</scope>
    <source>
        <strain>4047</strain>
    </source>
</reference>